<dbReference type="EMBL" id="CP000266">
    <property type="protein sequence ID" value="ABF05610.1"/>
    <property type="molecule type" value="Genomic_DNA"/>
</dbReference>
<dbReference type="RefSeq" id="WP_001076750.1">
    <property type="nucleotide sequence ID" value="NC_008258.1"/>
</dbReference>
<dbReference type="SMR" id="Q0SZA5"/>
<dbReference type="KEGG" id="sfv:SFV_3579"/>
<dbReference type="HOGENOM" id="CLU_013430_3_0_6"/>
<dbReference type="Proteomes" id="UP000000659">
    <property type="component" value="Chromosome"/>
</dbReference>
<dbReference type="GO" id="GO:0005886">
    <property type="term" value="C:plasma membrane"/>
    <property type="evidence" value="ECO:0007669"/>
    <property type="project" value="UniProtKB-SubCell"/>
</dbReference>
<dbReference type="GO" id="GO:0015086">
    <property type="term" value="F:cadmium ion transmembrane transporter activity"/>
    <property type="evidence" value="ECO:0007669"/>
    <property type="project" value="UniProtKB-UniRule"/>
</dbReference>
<dbReference type="GO" id="GO:0015093">
    <property type="term" value="F:ferrous iron transmembrane transporter activity"/>
    <property type="evidence" value="ECO:0007669"/>
    <property type="project" value="TreeGrafter"/>
</dbReference>
<dbReference type="GO" id="GO:0046872">
    <property type="term" value="F:metal ion binding"/>
    <property type="evidence" value="ECO:0007669"/>
    <property type="project" value="UniProtKB-KW"/>
</dbReference>
<dbReference type="GO" id="GO:0015341">
    <property type="term" value="F:zinc efflux antiporter activity"/>
    <property type="evidence" value="ECO:0007669"/>
    <property type="project" value="TreeGrafter"/>
</dbReference>
<dbReference type="GO" id="GO:0006882">
    <property type="term" value="P:intracellular zinc ion homeostasis"/>
    <property type="evidence" value="ECO:0007669"/>
    <property type="project" value="TreeGrafter"/>
</dbReference>
<dbReference type="FunFam" id="1.20.1510.10:FF:000001">
    <property type="entry name" value="Ferrous-iron efflux pump FieF"/>
    <property type="match status" value="1"/>
</dbReference>
<dbReference type="FunFam" id="3.30.70.1350:FF:000002">
    <property type="entry name" value="Ferrous-iron efflux pump FieF"/>
    <property type="match status" value="1"/>
</dbReference>
<dbReference type="Gene3D" id="1.20.1510.10">
    <property type="entry name" value="Cation efflux protein transmembrane domain"/>
    <property type="match status" value="1"/>
</dbReference>
<dbReference type="Gene3D" id="3.30.70.1350">
    <property type="entry name" value="Cation efflux protein, cytoplasmic domain"/>
    <property type="match status" value="1"/>
</dbReference>
<dbReference type="HAMAP" id="MF_01425">
    <property type="entry name" value="Cation_efflux_FieF"/>
    <property type="match status" value="1"/>
</dbReference>
<dbReference type="InterPro" id="IPR002524">
    <property type="entry name" value="Cation_efflux"/>
</dbReference>
<dbReference type="InterPro" id="IPR027470">
    <property type="entry name" value="Cation_efflux_CTD"/>
</dbReference>
<dbReference type="InterPro" id="IPR036837">
    <property type="entry name" value="Cation_efflux_CTD_sf"/>
</dbReference>
<dbReference type="InterPro" id="IPR023783">
    <property type="entry name" value="Cation_efflux_FieF"/>
</dbReference>
<dbReference type="InterPro" id="IPR027469">
    <property type="entry name" value="Cation_efflux_TMD_sf"/>
</dbReference>
<dbReference type="InterPro" id="IPR050291">
    <property type="entry name" value="CDF_Transporter"/>
</dbReference>
<dbReference type="NCBIfam" id="TIGR01297">
    <property type="entry name" value="CDF"/>
    <property type="match status" value="1"/>
</dbReference>
<dbReference type="NCBIfam" id="NF007064">
    <property type="entry name" value="PRK09509.1"/>
    <property type="match status" value="1"/>
</dbReference>
<dbReference type="PANTHER" id="PTHR43840:SF41">
    <property type="entry name" value="CATION-EFFLUX PUMP FIEF"/>
    <property type="match status" value="1"/>
</dbReference>
<dbReference type="PANTHER" id="PTHR43840">
    <property type="entry name" value="MITOCHONDRIAL METAL TRANSPORTER 1-RELATED"/>
    <property type="match status" value="1"/>
</dbReference>
<dbReference type="Pfam" id="PF01545">
    <property type="entry name" value="Cation_efflux"/>
    <property type="match status" value="1"/>
</dbReference>
<dbReference type="Pfam" id="PF16916">
    <property type="entry name" value="ZT_dimer"/>
    <property type="match status" value="1"/>
</dbReference>
<dbReference type="SUPFAM" id="SSF160240">
    <property type="entry name" value="Cation efflux protein cytoplasmic domain-like"/>
    <property type="match status" value="1"/>
</dbReference>
<dbReference type="SUPFAM" id="SSF161111">
    <property type="entry name" value="Cation efflux protein transmembrane domain-like"/>
    <property type="match status" value="1"/>
</dbReference>
<keyword id="KW-0997">Cell inner membrane</keyword>
<keyword id="KW-1003">Cell membrane</keyword>
<keyword id="KW-0406">Ion transport</keyword>
<keyword id="KW-0408">Iron</keyword>
<keyword id="KW-0410">Iron transport</keyword>
<keyword id="KW-0472">Membrane</keyword>
<keyword id="KW-0479">Metal-binding</keyword>
<keyword id="KW-0812">Transmembrane</keyword>
<keyword id="KW-1133">Transmembrane helix</keyword>
<keyword id="KW-0813">Transport</keyword>
<keyword id="KW-0862">Zinc</keyword>
<keyword id="KW-0864">Zinc transport</keyword>
<proteinExistence type="inferred from homology"/>
<feature type="chain" id="PRO_1000024330" description="Cation-efflux pump FieF">
    <location>
        <begin position="1"/>
        <end position="300"/>
    </location>
</feature>
<feature type="transmembrane region" description="Helical" evidence="1">
    <location>
        <begin position="12"/>
        <end position="32"/>
    </location>
</feature>
<feature type="transmembrane region" description="Helical" evidence="1">
    <location>
        <begin position="39"/>
        <end position="59"/>
    </location>
</feature>
<feature type="transmembrane region" description="Helical" evidence="1">
    <location>
        <begin position="82"/>
        <end position="102"/>
    </location>
</feature>
<feature type="transmembrane region" description="Helical" evidence="1">
    <location>
        <begin position="114"/>
        <end position="134"/>
    </location>
</feature>
<feature type="transmembrane region" description="Helical" evidence="1">
    <location>
        <begin position="156"/>
        <end position="176"/>
    </location>
</feature>
<feature type="transmembrane region" description="Helical" evidence="1">
    <location>
        <begin position="178"/>
        <end position="198"/>
    </location>
</feature>
<feature type="binding site" evidence="1">
    <location>
        <position position="45"/>
    </location>
    <ligand>
        <name>Zn(2+)</name>
        <dbReference type="ChEBI" id="CHEBI:29105"/>
    </ligand>
</feature>
<feature type="binding site" evidence="1">
    <location>
        <position position="49"/>
    </location>
    <ligand>
        <name>Zn(2+)</name>
        <dbReference type="ChEBI" id="CHEBI:29105"/>
    </ligand>
</feature>
<feature type="binding site" evidence="1">
    <location>
        <position position="153"/>
    </location>
    <ligand>
        <name>Zn(2+)</name>
        <dbReference type="ChEBI" id="CHEBI:29105"/>
    </ligand>
</feature>
<feature type="binding site" evidence="1">
    <location>
        <position position="157"/>
    </location>
    <ligand>
        <name>Zn(2+)</name>
        <dbReference type="ChEBI" id="CHEBI:29105"/>
    </ligand>
</feature>
<name>FIEF_SHIF8</name>
<organism>
    <name type="scientific">Shigella flexneri serotype 5b (strain 8401)</name>
    <dbReference type="NCBI Taxonomy" id="373384"/>
    <lineage>
        <taxon>Bacteria</taxon>
        <taxon>Pseudomonadati</taxon>
        <taxon>Pseudomonadota</taxon>
        <taxon>Gammaproteobacteria</taxon>
        <taxon>Enterobacterales</taxon>
        <taxon>Enterobacteriaceae</taxon>
        <taxon>Shigella</taxon>
    </lineage>
</organism>
<sequence length="300" mass="32855">MNQSYGRLVSRAAIAATAMASLLLLIKIFAWWYTGSVSILAALVDSLVDIGASLTNLLVVRYSLQPADDNHSFGHGKAESLAALAQSMFISGSALFLFLTGIQHLVSPTPMTDPGVGVIVTIVALICTIILVSFQRWVVRRTQSQAVRADMLHYQSDVMMNGAILLALGLSWYGWHRADALFALGIGIYILYSALRMGYEAVQSLLDRALPDEERQEIIGIVTSWPGVSGAHDLRTRQSGPTRFIQIHLEMEDSLPLVQAHMVADQVEQAILRRFPGSDVIIHQDPCSVVPREGKRSMLS</sequence>
<reference key="1">
    <citation type="journal article" date="2006" name="BMC Genomics">
        <title>Complete genome sequence of Shigella flexneri 5b and comparison with Shigella flexneri 2a.</title>
        <authorList>
            <person name="Nie H."/>
            <person name="Yang F."/>
            <person name="Zhang X."/>
            <person name="Yang J."/>
            <person name="Chen L."/>
            <person name="Wang J."/>
            <person name="Xiong Z."/>
            <person name="Peng J."/>
            <person name="Sun L."/>
            <person name="Dong J."/>
            <person name="Xue Y."/>
            <person name="Xu X."/>
            <person name="Chen S."/>
            <person name="Yao Z."/>
            <person name="Shen Y."/>
            <person name="Jin Q."/>
        </authorList>
    </citation>
    <scope>NUCLEOTIDE SEQUENCE [LARGE SCALE GENOMIC DNA]</scope>
    <source>
        <strain>8401</strain>
    </source>
</reference>
<evidence type="ECO:0000255" key="1">
    <source>
        <dbReference type="HAMAP-Rule" id="MF_01425"/>
    </source>
</evidence>
<protein>
    <recommendedName>
        <fullName evidence="1">Cation-efflux pump FieF</fullName>
    </recommendedName>
</protein>
<comment type="function">
    <text evidence="1">Divalent metal cation transporter which exports Zn(2+), Cd(2+) and possibly Fe(2+). May be involved in zinc and iron detoxification by efflux.</text>
</comment>
<comment type="catalytic activity">
    <reaction evidence="1">
        <text>Zn(2+)(in) + H(+)(out) = Zn(2+)(out) + H(+)(in)</text>
        <dbReference type="Rhea" id="RHEA:28839"/>
        <dbReference type="ChEBI" id="CHEBI:15378"/>
        <dbReference type="ChEBI" id="CHEBI:29105"/>
    </reaction>
</comment>
<comment type="catalytic activity">
    <reaction evidence="1">
        <text>Cd(2+)(in) + H(+)(out) = Cd(2+)(out) + H(+)(in)</text>
        <dbReference type="Rhea" id="RHEA:28739"/>
        <dbReference type="ChEBI" id="CHEBI:15378"/>
        <dbReference type="ChEBI" id="CHEBI:48775"/>
    </reaction>
</comment>
<comment type="catalytic activity">
    <reaction evidence="1">
        <text>Fe(2+)(in) + H(+)(out) = Fe(2+)(out) + H(+)(in)</text>
        <dbReference type="Rhea" id="RHEA:29439"/>
        <dbReference type="ChEBI" id="CHEBI:15378"/>
        <dbReference type="ChEBI" id="CHEBI:29033"/>
    </reaction>
</comment>
<comment type="subunit">
    <text evidence="1">Homodimer.</text>
</comment>
<comment type="subcellular location">
    <subcellularLocation>
        <location evidence="1">Cell inner membrane</location>
        <topology evidence="1">Multi-pass membrane protein</topology>
    </subcellularLocation>
</comment>
<comment type="similarity">
    <text evidence="1">Belongs to the cation diffusion facilitator (CDF) transporter (TC 2.A.4) family. FieF subfamily.</text>
</comment>
<accession>Q0SZA5</accession>
<gene>
    <name evidence="1" type="primary">fieF</name>
    <name type="ordered locus">SFV_3579</name>
</gene>